<keyword id="KW-0169">Cobalamin biosynthesis</keyword>
<keyword id="KW-0328">Glycosyltransferase</keyword>
<keyword id="KW-0808">Transferase</keyword>
<name>COBT_RHIE6</name>
<protein>
    <recommendedName>
        <fullName evidence="1">Nicotinate-nucleotide--dimethylbenzimidazole phosphoribosyltransferase</fullName>
        <shortName evidence="1">NN:DBI PRT</shortName>
        <ecNumber evidence="1">2.4.2.21</ecNumber>
    </recommendedName>
    <alternativeName>
        <fullName evidence="1">N(1)-alpha-phosphoribosyltransferase</fullName>
    </alternativeName>
</protein>
<organism>
    <name type="scientific">Rhizobium etli (strain CIAT 652)</name>
    <dbReference type="NCBI Taxonomy" id="491916"/>
    <lineage>
        <taxon>Bacteria</taxon>
        <taxon>Pseudomonadati</taxon>
        <taxon>Pseudomonadota</taxon>
        <taxon>Alphaproteobacteria</taxon>
        <taxon>Hyphomicrobiales</taxon>
        <taxon>Rhizobiaceae</taxon>
        <taxon>Rhizobium/Agrobacterium group</taxon>
        <taxon>Rhizobium</taxon>
    </lineage>
</organism>
<dbReference type="EC" id="2.4.2.21" evidence="1"/>
<dbReference type="EMBL" id="CP001074">
    <property type="protein sequence ID" value="ACE91496.1"/>
    <property type="molecule type" value="Genomic_DNA"/>
</dbReference>
<dbReference type="SMR" id="B3PQS3"/>
<dbReference type="KEGG" id="rec:RHECIAT_CH0002544"/>
<dbReference type="eggNOG" id="COG2038">
    <property type="taxonomic scope" value="Bacteria"/>
</dbReference>
<dbReference type="HOGENOM" id="CLU_002982_0_1_5"/>
<dbReference type="UniPathway" id="UPA00061">
    <property type="reaction ID" value="UER00516"/>
</dbReference>
<dbReference type="Proteomes" id="UP000008817">
    <property type="component" value="Chromosome"/>
</dbReference>
<dbReference type="GO" id="GO:0008939">
    <property type="term" value="F:nicotinate-nucleotide-dimethylbenzimidazole phosphoribosyltransferase activity"/>
    <property type="evidence" value="ECO:0007669"/>
    <property type="project" value="UniProtKB-UniRule"/>
</dbReference>
<dbReference type="GO" id="GO:0009236">
    <property type="term" value="P:cobalamin biosynthetic process"/>
    <property type="evidence" value="ECO:0007669"/>
    <property type="project" value="UniProtKB-KW"/>
</dbReference>
<dbReference type="CDD" id="cd02439">
    <property type="entry name" value="DMB-PRT_CobT"/>
    <property type="match status" value="1"/>
</dbReference>
<dbReference type="Gene3D" id="1.10.1610.10">
    <property type="match status" value="1"/>
</dbReference>
<dbReference type="Gene3D" id="3.40.50.10210">
    <property type="match status" value="1"/>
</dbReference>
<dbReference type="HAMAP" id="MF_00230">
    <property type="entry name" value="CobT"/>
    <property type="match status" value="1"/>
</dbReference>
<dbReference type="InterPro" id="IPR003200">
    <property type="entry name" value="Nict_dMeBzImd_PRibTrfase"/>
</dbReference>
<dbReference type="InterPro" id="IPR017846">
    <property type="entry name" value="Nict_dMeBzImd_PRibTrfase_bact"/>
</dbReference>
<dbReference type="InterPro" id="IPR023195">
    <property type="entry name" value="Nict_dMeBzImd_PRibTrfase_N"/>
</dbReference>
<dbReference type="InterPro" id="IPR036087">
    <property type="entry name" value="Nict_dMeBzImd_PRibTrfase_sf"/>
</dbReference>
<dbReference type="NCBIfam" id="TIGR03160">
    <property type="entry name" value="cobT_DBIPRT"/>
    <property type="match status" value="1"/>
</dbReference>
<dbReference type="NCBIfam" id="NF000996">
    <property type="entry name" value="PRK00105.1"/>
    <property type="match status" value="1"/>
</dbReference>
<dbReference type="PANTHER" id="PTHR43463">
    <property type="entry name" value="NICOTINATE-NUCLEOTIDE--DIMETHYLBENZIMIDAZOLE PHOSPHORIBOSYLTRANSFERASE"/>
    <property type="match status" value="1"/>
</dbReference>
<dbReference type="PANTHER" id="PTHR43463:SF1">
    <property type="entry name" value="NICOTINATE-NUCLEOTIDE--DIMETHYLBENZIMIDAZOLE PHOSPHORIBOSYLTRANSFERASE"/>
    <property type="match status" value="1"/>
</dbReference>
<dbReference type="Pfam" id="PF02277">
    <property type="entry name" value="DBI_PRT"/>
    <property type="match status" value="1"/>
</dbReference>
<dbReference type="SUPFAM" id="SSF52733">
    <property type="entry name" value="Nicotinate mononucleotide:5,6-dimethylbenzimidazole phosphoribosyltransferase (CobT)"/>
    <property type="match status" value="1"/>
</dbReference>
<gene>
    <name evidence="1" type="primary">cobT</name>
    <name type="ordered locus">RHECIAT_CH0002544</name>
</gene>
<evidence type="ECO:0000255" key="1">
    <source>
        <dbReference type="HAMAP-Rule" id="MF_00230"/>
    </source>
</evidence>
<feature type="chain" id="PRO_1000100471" description="Nicotinate-nucleotide--dimethylbenzimidazole phosphoribosyltransferase">
    <location>
        <begin position="1"/>
        <end position="338"/>
    </location>
</feature>
<feature type="active site" description="Proton acceptor" evidence="1">
    <location>
        <position position="305"/>
    </location>
</feature>
<proteinExistence type="inferred from homology"/>
<comment type="function">
    <text evidence="1">Catalyzes the synthesis of alpha-ribazole-5'-phosphate from nicotinate mononucleotide (NAMN) and 5,6-dimethylbenzimidazole (DMB).</text>
</comment>
<comment type="catalytic activity">
    <reaction evidence="1">
        <text>5,6-dimethylbenzimidazole + nicotinate beta-D-ribonucleotide = alpha-ribazole 5'-phosphate + nicotinate + H(+)</text>
        <dbReference type="Rhea" id="RHEA:11196"/>
        <dbReference type="ChEBI" id="CHEBI:15378"/>
        <dbReference type="ChEBI" id="CHEBI:15890"/>
        <dbReference type="ChEBI" id="CHEBI:32544"/>
        <dbReference type="ChEBI" id="CHEBI:57502"/>
        <dbReference type="ChEBI" id="CHEBI:57918"/>
        <dbReference type="EC" id="2.4.2.21"/>
    </reaction>
</comment>
<comment type="pathway">
    <text evidence="1">Nucleoside biosynthesis; alpha-ribazole biosynthesis; alpha-ribazole from 5,6-dimethylbenzimidazole: step 1/2.</text>
</comment>
<comment type="similarity">
    <text evidence="1">Belongs to the CobT family.</text>
</comment>
<accession>B3PQS3</accession>
<sequence>MSVSGLPFDDFRTLLRDLPGPDARALVAARERDAQLTKPPGALGRLEEIAFWLAAWTGRPPAVNRPLVAIFAGNHGVTRQGITPFPPAVTQQMVENFAAGGAAINQICVTHDLGLKVFDLALDYPTGDITEEAALSERDCAATMAFGMEAIAGGTDLLCIGEMGIGNTTIAAAINYALYGGSARDWVGPGTGSEGDMLERKVAAVEKAVALHSDHLDDPLEIMRRLGGREIAAMAGAILAARMERIPVLIDGYVATAAAAILKAANPSALDHCLIGHVSAEPGHLRSIEMLGKTPLLALGMRLGEGTGAALAAGIVKAAAACHSGMATFAQAGVSGKH</sequence>
<reference key="1">
    <citation type="journal article" date="2010" name="Appl. Environ. Microbiol.">
        <title>Conserved symbiotic plasmid DNA sequences in the multireplicon pangenomic structure of Rhizobium etli.</title>
        <authorList>
            <person name="Gonzalez V."/>
            <person name="Acosta J.L."/>
            <person name="Santamaria R.I."/>
            <person name="Bustos P."/>
            <person name="Fernandez J.L."/>
            <person name="Hernandez Gonzalez I.L."/>
            <person name="Diaz R."/>
            <person name="Flores M."/>
            <person name="Palacios R."/>
            <person name="Mora J."/>
            <person name="Davila G."/>
        </authorList>
    </citation>
    <scope>NUCLEOTIDE SEQUENCE [LARGE SCALE GENOMIC DNA]</scope>
    <source>
        <strain>CIAT 652</strain>
    </source>
</reference>